<accession>B7HKL5</accession>
<organism>
    <name type="scientific">Bacillus cereus (strain AH187)</name>
    <dbReference type="NCBI Taxonomy" id="405534"/>
    <lineage>
        <taxon>Bacteria</taxon>
        <taxon>Bacillati</taxon>
        <taxon>Bacillota</taxon>
        <taxon>Bacilli</taxon>
        <taxon>Bacillales</taxon>
        <taxon>Bacillaceae</taxon>
        <taxon>Bacillus</taxon>
        <taxon>Bacillus cereus group</taxon>
    </lineage>
</organism>
<reference key="1">
    <citation type="submission" date="2008-10" db="EMBL/GenBank/DDBJ databases">
        <title>Genome sequence of Bacillus cereus AH187.</title>
        <authorList>
            <person name="Dodson R.J."/>
            <person name="Durkin A.S."/>
            <person name="Rosovitz M.J."/>
            <person name="Rasko D.A."/>
            <person name="Kolsto A.B."/>
            <person name="Okstad O.A."/>
            <person name="Ravel J."/>
            <person name="Sutton G."/>
        </authorList>
    </citation>
    <scope>NUCLEOTIDE SEQUENCE [LARGE SCALE GENOMIC DNA]</scope>
    <source>
        <strain>AH187</strain>
    </source>
</reference>
<comment type="function">
    <text evidence="1">Increases the activity of extracellular murein hydrolases possibly by mediating their export via hole formation. Inhibited by the antiholin-like proteins LrgAB. In an unstressed cell, the LrgAB products probably inhibit the function of the CidA protein. When a cell is stressed by the addition of antibiotics or by other factors in the environment, CidA possibly oligomerizes within the bacterial cell membrane, creating lesions that disrupt the proton motive force, which in turn results in loss of cell viability. These lesions are also hypothesized to regulate the subsequent cell lysis by either allowing the murein hydrolases access to the cell wall substrate and/or regulating their activity by a possible change in the cell wall pH that results from loss of membrane potential.</text>
</comment>
<comment type="subcellular location">
    <subcellularLocation>
        <location evidence="1">Cell membrane</location>
        <topology evidence="1">Multi-pass membrane protein</topology>
    </subcellularLocation>
</comment>
<comment type="similarity">
    <text evidence="1">Belongs to the CidA/LrgA family. CidA subfamily.</text>
</comment>
<sequence>MKWWKLSGQILLLFCFAWTGEWIAKQAHLPVPGSIIGIFLLLISLKFNLVKKEWIQDGADFLLKELILFFIPSAVAVIRYKDTLSQYGIDLILIIMISTLCVTLVTGLLTELLLKRKGSVQ</sequence>
<evidence type="ECO:0000255" key="1">
    <source>
        <dbReference type="HAMAP-Rule" id="MF_01143"/>
    </source>
</evidence>
<dbReference type="EMBL" id="CP001177">
    <property type="protein sequence ID" value="ACJ79224.1"/>
    <property type="molecule type" value="Genomic_DNA"/>
</dbReference>
<dbReference type="SMR" id="B7HKL5"/>
<dbReference type="KEGG" id="bcr:BCAH187_A3710"/>
<dbReference type="HOGENOM" id="CLU_113736_3_2_9"/>
<dbReference type="Proteomes" id="UP000002214">
    <property type="component" value="Chromosome"/>
</dbReference>
<dbReference type="GO" id="GO:0005886">
    <property type="term" value="C:plasma membrane"/>
    <property type="evidence" value="ECO:0007669"/>
    <property type="project" value="UniProtKB-SubCell"/>
</dbReference>
<dbReference type="GO" id="GO:0019835">
    <property type="term" value="P:cytolysis"/>
    <property type="evidence" value="ECO:0007669"/>
    <property type="project" value="UniProtKB-UniRule"/>
</dbReference>
<dbReference type="GO" id="GO:0031640">
    <property type="term" value="P:killing of cells of another organism"/>
    <property type="evidence" value="ECO:0007669"/>
    <property type="project" value="UniProtKB-KW"/>
</dbReference>
<dbReference type="GO" id="GO:0012501">
    <property type="term" value="P:programmed cell death"/>
    <property type="evidence" value="ECO:0007669"/>
    <property type="project" value="UniProtKB-UniRule"/>
</dbReference>
<dbReference type="HAMAP" id="MF_01143">
    <property type="entry name" value="CidA"/>
    <property type="match status" value="1"/>
</dbReference>
<dbReference type="InterPro" id="IPR023760">
    <property type="entry name" value="Holin-like_CidA"/>
</dbReference>
<dbReference type="InterPro" id="IPR005538">
    <property type="entry name" value="LrgA/CidA"/>
</dbReference>
<dbReference type="NCBIfam" id="NF002460">
    <property type="entry name" value="PRK01658.1"/>
    <property type="match status" value="1"/>
</dbReference>
<dbReference type="PANTHER" id="PTHR33931:SF2">
    <property type="entry name" value="HOLIN-LIKE PROTEIN CIDA"/>
    <property type="match status" value="1"/>
</dbReference>
<dbReference type="PANTHER" id="PTHR33931">
    <property type="entry name" value="HOLIN-LIKE PROTEIN CIDA-RELATED"/>
    <property type="match status" value="1"/>
</dbReference>
<dbReference type="Pfam" id="PF03788">
    <property type="entry name" value="LrgA"/>
    <property type="match status" value="1"/>
</dbReference>
<feature type="chain" id="PRO_1000137354" description="Holin-like protein CidA">
    <location>
        <begin position="1"/>
        <end position="121"/>
    </location>
</feature>
<feature type="transmembrane region" description="Helical" evidence="1">
    <location>
        <begin position="3"/>
        <end position="23"/>
    </location>
</feature>
<feature type="transmembrane region" description="Helical" evidence="1">
    <location>
        <begin position="30"/>
        <end position="50"/>
    </location>
</feature>
<feature type="transmembrane region" description="Helical" evidence="1">
    <location>
        <begin position="58"/>
        <end position="78"/>
    </location>
</feature>
<feature type="transmembrane region" description="Helical" evidence="1">
    <location>
        <begin position="89"/>
        <end position="109"/>
    </location>
</feature>
<keyword id="KW-1003">Cell membrane</keyword>
<keyword id="KW-0204">Cytolysis</keyword>
<keyword id="KW-0472">Membrane</keyword>
<keyword id="KW-0812">Transmembrane</keyword>
<keyword id="KW-1133">Transmembrane helix</keyword>
<protein>
    <recommendedName>
        <fullName evidence="1">Holin-like protein CidA</fullName>
    </recommendedName>
</protein>
<proteinExistence type="inferred from homology"/>
<gene>
    <name evidence="1" type="primary">cidA</name>
    <name type="ordered locus">BCAH187_A3710</name>
</gene>
<name>CIDA_BACC7</name>